<dbReference type="EC" id="4.2.1.59" evidence="1"/>
<dbReference type="EC" id="5.3.3.14" evidence="1"/>
<dbReference type="EMBL" id="CU468135">
    <property type="protein sequence ID" value="CAO97152.1"/>
    <property type="molecule type" value="Genomic_DNA"/>
</dbReference>
<dbReference type="RefSeq" id="WP_012441823.1">
    <property type="nucleotide sequence ID" value="NC_010694.1"/>
</dbReference>
<dbReference type="SMR" id="B2VDE7"/>
<dbReference type="STRING" id="465817.ETA_21060"/>
<dbReference type="KEGG" id="eta:ETA_21060"/>
<dbReference type="eggNOG" id="COG0764">
    <property type="taxonomic scope" value="Bacteria"/>
</dbReference>
<dbReference type="HOGENOM" id="CLU_097925_0_0_6"/>
<dbReference type="OrthoDB" id="9786735at2"/>
<dbReference type="UniPathway" id="UPA00094"/>
<dbReference type="Proteomes" id="UP000001726">
    <property type="component" value="Chromosome"/>
</dbReference>
<dbReference type="GO" id="GO:0005737">
    <property type="term" value="C:cytoplasm"/>
    <property type="evidence" value="ECO:0007669"/>
    <property type="project" value="UniProtKB-SubCell"/>
</dbReference>
<dbReference type="GO" id="GO:0019171">
    <property type="term" value="F:(3R)-hydroxyacyl-[acyl-carrier-protein] dehydratase activity"/>
    <property type="evidence" value="ECO:0007669"/>
    <property type="project" value="UniProtKB-UniRule"/>
</dbReference>
<dbReference type="GO" id="GO:0034017">
    <property type="term" value="F:trans-2-decenoyl-acyl-carrier-protein isomerase activity"/>
    <property type="evidence" value="ECO:0007669"/>
    <property type="project" value="UniProtKB-UniRule"/>
</dbReference>
<dbReference type="GO" id="GO:0006636">
    <property type="term" value="P:unsaturated fatty acid biosynthetic process"/>
    <property type="evidence" value="ECO:0007669"/>
    <property type="project" value="UniProtKB-UniRule"/>
</dbReference>
<dbReference type="CDD" id="cd01287">
    <property type="entry name" value="FabA"/>
    <property type="match status" value="1"/>
</dbReference>
<dbReference type="FunFam" id="3.10.129.10:FF:000003">
    <property type="entry name" value="3-hydroxydecanoyl-[acyl-carrier-protein] dehydratase"/>
    <property type="match status" value="1"/>
</dbReference>
<dbReference type="Gene3D" id="3.10.129.10">
    <property type="entry name" value="Hotdog Thioesterase"/>
    <property type="match status" value="1"/>
</dbReference>
<dbReference type="HAMAP" id="MF_00405">
    <property type="entry name" value="FabA"/>
    <property type="match status" value="1"/>
</dbReference>
<dbReference type="InterPro" id="IPR010083">
    <property type="entry name" value="FabA"/>
</dbReference>
<dbReference type="InterPro" id="IPR013114">
    <property type="entry name" value="FabA_FabZ"/>
</dbReference>
<dbReference type="InterPro" id="IPR029069">
    <property type="entry name" value="HotDog_dom_sf"/>
</dbReference>
<dbReference type="NCBIfam" id="TIGR01749">
    <property type="entry name" value="fabA"/>
    <property type="match status" value="1"/>
</dbReference>
<dbReference type="NCBIfam" id="NF003509">
    <property type="entry name" value="PRK05174.1"/>
    <property type="match status" value="1"/>
</dbReference>
<dbReference type="PANTHER" id="PTHR30272">
    <property type="entry name" value="3-HYDROXYACYL-[ACYL-CARRIER-PROTEIN] DEHYDRATASE"/>
    <property type="match status" value="1"/>
</dbReference>
<dbReference type="PANTHER" id="PTHR30272:SF8">
    <property type="entry name" value="3-HYDROXYDECANOYL-[ACYL-CARRIER-PROTEIN] DEHYDRATASE"/>
    <property type="match status" value="1"/>
</dbReference>
<dbReference type="Pfam" id="PF07977">
    <property type="entry name" value="FabA"/>
    <property type="match status" value="1"/>
</dbReference>
<dbReference type="SUPFAM" id="SSF54637">
    <property type="entry name" value="Thioesterase/thiol ester dehydrase-isomerase"/>
    <property type="match status" value="1"/>
</dbReference>
<accession>B2VDE7</accession>
<proteinExistence type="inferred from homology"/>
<name>FABA_ERWT9</name>
<feature type="chain" id="PRO_1000201176" description="3-hydroxydecanoyl-[acyl-carrier-protein] dehydratase">
    <location>
        <begin position="1"/>
        <end position="172"/>
    </location>
</feature>
<feature type="active site" evidence="1">
    <location>
        <position position="71"/>
    </location>
</feature>
<sequence>MVDKRESYTKEDLIASGRSELFGAGGPPLPSGNMLMMDRVVKMTEDGGKYDKGFVEAELDINPDLWFFSCHFIGDPVMPGCLGLDAMWQLVGFYLGWLGGEGKGRALGVGEVKFSGQVLPTAKKVSYRIHFKRVINRKLVMGVADGEVLVDGEVIYTASDLKVGLFKDTAAF</sequence>
<comment type="function">
    <text evidence="1">Necessary for the introduction of cis unsaturation into fatty acids. Catalyzes the dehydration of (3R)-3-hydroxydecanoyl-ACP to E-(2)-decenoyl-ACP and then its isomerization to Z-(3)-decenoyl-ACP. Can catalyze the dehydratase reaction for beta-hydroxyacyl-ACPs with saturated chain lengths up to 16:0, being most active on intermediate chain length.</text>
</comment>
<comment type="catalytic activity">
    <reaction evidence="1">
        <text>a (3R)-hydroxyacyl-[ACP] = a (2E)-enoyl-[ACP] + H2O</text>
        <dbReference type="Rhea" id="RHEA:13097"/>
        <dbReference type="Rhea" id="RHEA-COMP:9925"/>
        <dbReference type="Rhea" id="RHEA-COMP:9945"/>
        <dbReference type="ChEBI" id="CHEBI:15377"/>
        <dbReference type="ChEBI" id="CHEBI:78784"/>
        <dbReference type="ChEBI" id="CHEBI:78827"/>
        <dbReference type="EC" id="4.2.1.59"/>
    </reaction>
</comment>
<comment type="catalytic activity">
    <reaction evidence="1">
        <text>(3R)-hydroxydecanoyl-[ACP] = (2E)-decenoyl-[ACP] + H2O</text>
        <dbReference type="Rhea" id="RHEA:41860"/>
        <dbReference type="Rhea" id="RHEA-COMP:9638"/>
        <dbReference type="Rhea" id="RHEA-COMP:9639"/>
        <dbReference type="ChEBI" id="CHEBI:15377"/>
        <dbReference type="ChEBI" id="CHEBI:78466"/>
        <dbReference type="ChEBI" id="CHEBI:78467"/>
    </reaction>
</comment>
<comment type="catalytic activity">
    <reaction evidence="1">
        <text>(2E)-decenoyl-[ACP] = (3Z)-decenoyl-[ACP]</text>
        <dbReference type="Rhea" id="RHEA:23568"/>
        <dbReference type="Rhea" id="RHEA-COMP:9639"/>
        <dbReference type="Rhea" id="RHEA-COMP:9927"/>
        <dbReference type="ChEBI" id="CHEBI:78467"/>
        <dbReference type="ChEBI" id="CHEBI:78798"/>
        <dbReference type="EC" id="5.3.3.14"/>
    </reaction>
</comment>
<comment type="pathway">
    <text evidence="1">Lipid metabolism; fatty acid biosynthesis.</text>
</comment>
<comment type="subunit">
    <text evidence="1">Homodimer.</text>
</comment>
<comment type="subcellular location">
    <subcellularLocation>
        <location evidence="1">Cytoplasm</location>
    </subcellularLocation>
</comment>
<comment type="similarity">
    <text evidence="1">Belongs to the thioester dehydratase family. FabA subfamily.</text>
</comment>
<keyword id="KW-0963">Cytoplasm</keyword>
<keyword id="KW-0275">Fatty acid biosynthesis</keyword>
<keyword id="KW-0276">Fatty acid metabolism</keyword>
<keyword id="KW-0413">Isomerase</keyword>
<keyword id="KW-0444">Lipid biosynthesis</keyword>
<keyword id="KW-0443">Lipid metabolism</keyword>
<keyword id="KW-0456">Lyase</keyword>
<keyword id="KW-1185">Reference proteome</keyword>
<organism>
    <name type="scientific">Erwinia tasmaniensis (strain DSM 17950 / CFBP 7177 / CIP 109463 / NCPPB 4357 / Et1/99)</name>
    <dbReference type="NCBI Taxonomy" id="465817"/>
    <lineage>
        <taxon>Bacteria</taxon>
        <taxon>Pseudomonadati</taxon>
        <taxon>Pseudomonadota</taxon>
        <taxon>Gammaproteobacteria</taxon>
        <taxon>Enterobacterales</taxon>
        <taxon>Erwiniaceae</taxon>
        <taxon>Erwinia</taxon>
    </lineage>
</organism>
<gene>
    <name evidence="1" type="primary">fabA</name>
    <name type="ordered locus">ETA_21060</name>
</gene>
<evidence type="ECO:0000255" key="1">
    <source>
        <dbReference type="HAMAP-Rule" id="MF_00405"/>
    </source>
</evidence>
<protein>
    <recommendedName>
        <fullName evidence="1">3-hydroxydecanoyl-[acyl-carrier-protein] dehydratase</fullName>
        <ecNumber evidence="1">4.2.1.59</ecNumber>
    </recommendedName>
    <alternativeName>
        <fullName evidence="1">3-hydroxyacyl-[acyl-carrier-protein] dehydratase FabA</fullName>
    </alternativeName>
    <alternativeName>
        <fullName evidence="1">Beta-hydroxydecanoyl thioester dehydrase</fullName>
    </alternativeName>
    <alternativeName>
        <fullName evidence="1">Trans-2-decenoyl-[acyl-carrier-protein] isomerase</fullName>
        <ecNumber evidence="1">5.3.3.14</ecNumber>
    </alternativeName>
</protein>
<reference key="1">
    <citation type="journal article" date="2008" name="Environ. Microbiol.">
        <title>The genome of Erwinia tasmaniensis strain Et1/99, a non-pathogenic bacterium in the genus Erwinia.</title>
        <authorList>
            <person name="Kube M."/>
            <person name="Migdoll A.M."/>
            <person name="Mueller I."/>
            <person name="Kuhl H."/>
            <person name="Beck A."/>
            <person name="Reinhardt R."/>
            <person name="Geider K."/>
        </authorList>
    </citation>
    <scope>NUCLEOTIDE SEQUENCE [LARGE SCALE GENOMIC DNA]</scope>
    <source>
        <strain>DSM 17950 / CFBP 7177 / CIP 109463 / NCPPB 4357 / Et1/99</strain>
    </source>
</reference>